<accession>Q970L2</accession>
<gene>
    <name evidence="3" type="ordered locus">STK_15850</name>
    <name evidence="3" type="ORF">ST1585</name>
</gene>
<sequence>MPCRGLHSIPAGPVEFPEIATVYVMCGEKLTVMIDAGVSNSIADFSFLDKLDYIVLTHLHIDHIGLLPELLQVYKAKVLVKSGFKKYLTSEDGLKKLNESAEKVLGDLYYVYGGLEKKLDQDKVIEVEGNEEFDLGGYRMRLIYTPGHARHHMSVLVDDFLFTGDSAGAYFNGVVIPTTPPVIDYKMYMESLKRQIELKPKVVGFAHGGLVSPKIMEEHLKQMLSKEEIQINVDIGGVAGEILRKQIEVNLRGLRESKKSI</sequence>
<comment type="subunit">
    <text evidence="1">Monomer.</text>
</comment>
<comment type="similarity">
    <text evidence="2">Belongs to the metallo-beta-lactamase superfamily.</text>
</comment>
<name>MBLFP_SULTO</name>
<proteinExistence type="evidence at protein level"/>
<organism>
    <name type="scientific">Sulfurisphaera tokodaii (strain DSM 16993 / JCM 10545 / NBRC 100140 / 7)</name>
    <name type="common">Sulfolobus tokodaii</name>
    <dbReference type="NCBI Taxonomy" id="273063"/>
    <lineage>
        <taxon>Archaea</taxon>
        <taxon>Thermoproteota</taxon>
        <taxon>Thermoprotei</taxon>
        <taxon>Sulfolobales</taxon>
        <taxon>Sulfolobaceae</taxon>
        <taxon>Sulfurisphaera</taxon>
    </lineage>
</organism>
<dbReference type="EMBL" id="BA000023">
    <property type="protein sequence ID" value="BAB66661.1"/>
    <property type="molecule type" value="Genomic_DNA"/>
</dbReference>
<dbReference type="RefSeq" id="WP_010979639.1">
    <property type="nucleotide sequence ID" value="NC_003106.2"/>
</dbReference>
<dbReference type="PDB" id="3ADR">
    <property type="method" value="X-ray"/>
    <property type="resolution" value="1.80 A"/>
    <property type="chains" value="A/B=1-261"/>
</dbReference>
<dbReference type="PDBsum" id="3ADR"/>
<dbReference type="SMR" id="Q970L2"/>
<dbReference type="STRING" id="273063.STK_15850"/>
<dbReference type="GeneID" id="1459625"/>
<dbReference type="KEGG" id="sto:STK_15850"/>
<dbReference type="PATRIC" id="fig|273063.9.peg.1805"/>
<dbReference type="eggNOG" id="arCOG00505">
    <property type="taxonomic scope" value="Archaea"/>
</dbReference>
<dbReference type="OrthoDB" id="197151at2157"/>
<dbReference type="BRENDA" id="3.5.2.6">
    <property type="organism ID" value="15396"/>
</dbReference>
<dbReference type="EvolutionaryTrace" id="Q970L2"/>
<dbReference type="Proteomes" id="UP000001015">
    <property type="component" value="Chromosome"/>
</dbReference>
<dbReference type="GO" id="GO:0008270">
    <property type="term" value="F:zinc ion binding"/>
    <property type="evidence" value="ECO:0000314"/>
    <property type="project" value="UniProtKB"/>
</dbReference>
<dbReference type="CDD" id="cd07726">
    <property type="entry name" value="ST1585-like_MBL-fold"/>
    <property type="match status" value="1"/>
</dbReference>
<dbReference type="Gene3D" id="3.60.15.10">
    <property type="entry name" value="Ribonuclease Z/Hydroxyacylglutathione hydrolase-like"/>
    <property type="match status" value="1"/>
</dbReference>
<dbReference type="InterPro" id="IPR001279">
    <property type="entry name" value="Metallo-B-lactamas"/>
</dbReference>
<dbReference type="InterPro" id="IPR050855">
    <property type="entry name" value="NDM-1-like"/>
</dbReference>
<dbReference type="InterPro" id="IPR036866">
    <property type="entry name" value="RibonucZ/Hydroxyglut_hydro"/>
</dbReference>
<dbReference type="InterPro" id="IPR037482">
    <property type="entry name" value="ST1585_MBL-fold"/>
</dbReference>
<dbReference type="PANTHER" id="PTHR42951:SF4">
    <property type="entry name" value="ACYL-COENZYME A THIOESTERASE MBLAC2"/>
    <property type="match status" value="1"/>
</dbReference>
<dbReference type="PANTHER" id="PTHR42951">
    <property type="entry name" value="METALLO-BETA-LACTAMASE DOMAIN-CONTAINING"/>
    <property type="match status" value="1"/>
</dbReference>
<dbReference type="Pfam" id="PF00753">
    <property type="entry name" value="Lactamase_B"/>
    <property type="match status" value="1"/>
</dbReference>
<dbReference type="SMART" id="SM00849">
    <property type="entry name" value="Lactamase_B"/>
    <property type="match status" value="1"/>
</dbReference>
<dbReference type="SUPFAM" id="SSF56281">
    <property type="entry name" value="Metallo-hydrolase/oxidoreductase"/>
    <property type="match status" value="1"/>
</dbReference>
<protein>
    <recommendedName>
        <fullName evidence="2">Metallo-beta-lactamase fold-containing protein ST1585</fullName>
    </recommendedName>
    <alternativeName>
        <fullName evidence="2">Putative quorum sensing signal protein STK_15850</fullName>
    </alternativeName>
</protein>
<evidence type="ECO:0000269" key="1">
    <source>
    </source>
</evidence>
<evidence type="ECO:0000303" key="2">
    <source>
    </source>
</evidence>
<evidence type="ECO:0000312" key="3">
    <source>
        <dbReference type="EMBL" id="BAB66661.1"/>
    </source>
</evidence>
<evidence type="ECO:0000312" key="4">
    <source>
        <dbReference type="Proteomes" id="UP000001015"/>
    </source>
</evidence>
<evidence type="ECO:0007744" key="5">
    <source>
        <dbReference type="PDB" id="3ADR"/>
    </source>
</evidence>
<evidence type="ECO:0007829" key="6">
    <source>
        <dbReference type="PDB" id="3ADR"/>
    </source>
</evidence>
<keyword id="KW-0002">3D-structure</keyword>
<keyword id="KW-0479">Metal-binding</keyword>
<keyword id="KW-1185">Reference proteome</keyword>
<keyword id="KW-0862">Zinc</keyword>
<feature type="chain" id="PRO_0000433882" description="Metallo-beta-lactamase fold-containing protein ST1585">
    <location>
        <begin position="1"/>
        <end position="261"/>
    </location>
</feature>
<feature type="binding site" evidence="1 5">
    <location>
        <position position="58"/>
    </location>
    <ligand>
        <name>Zn(2+)</name>
        <dbReference type="ChEBI" id="CHEBI:29105"/>
        <label>1</label>
    </ligand>
</feature>
<feature type="binding site" evidence="1 5">
    <location>
        <position position="60"/>
    </location>
    <ligand>
        <name>Zn(2+)</name>
        <dbReference type="ChEBI" id="CHEBI:29105"/>
        <label>1</label>
    </ligand>
</feature>
<feature type="binding site" evidence="1 5">
    <location>
        <position position="62"/>
    </location>
    <ligand>
        <name>Zn(2+)</name>
        <dbReference type="ChEBI" id="CHEBI:29105"/>
        <label>2</label>
    </ligand>
</feature>
<feature type="binding site" evidence="1 5">
    <location>
        <position position="63"/>
    </location>
    <ligand>
        <name>Zn(2+)</name>
        <dbReference type="ChEBI" id="CHEBI:29105"/>
        <label>2</label>
    </ligand>
</feature>
<feature type="binding site" evidence="1 5">
    <location>
        <position position="148"/>
    </location>
    <ligand>
        <name>Zn(2+)</name>
        <dbReference type="ChEBI" id="CHEBI:29105"/>
        <label>1</label>
    </ligand>
</feature>
<feature type="binding site" evidence="1 5">
    <location>
        <position position="165"/>
    </location>
    <ligand>
        <name>Zn(2+)</name>
        <dbReference type="ChEBI" id="CHEBI:29105"/>
        <label>1</label>
    </ligand>
</feature>
<feature type="binding site" evidence="1 5">
    <location>
        <position position="165"/>
    </location>
    <ligand>
        <name>Zn(2+)</name>
        <dbReference type="ChEBI" id="CHEBI:29105"/>
        <label>2</label>
    </ligand>
</feature>
<feature type="binding site" evidence="1 5">
    <location>
        <position position="207"/>
    </location>
    <ligand>
        <name>Zn(2+)</name>
        <dbReference type="ChEBI" id="CHEBI:29105"/>
        <label>2</label>
    </ligand>
</feature>
<feature type="strand" evidence="6">
    <location>
        <begin position="5"/>
        <end position="10"/>
    </location>
</feature>
<feature type="helix" evidence="6">
    <location>
        <begin position="17"/>
        <end position="19"/>
    </location>
</feature>
<feature type="strand" evidence="6">
    <location>
        <begin position="20"/>
        <end position="26"/>
    </location>
</feature>
<feature type="strand" evidence="6">
    <location>
        <begin position="31"/>
        <end position="34"/>
    </location>
</feature>
<feature type="strand" evidence="6">
    <location>
        <begin position="53"/>
        <end position="55"/>
    </location>
</feature>
<feature type="helix" evidence="6">
    <location>
        <begin position="61"/>
        <end position="63"/>
    </location>
</feature>
<feature type="turn" evidence="6">
    <location>
        <begin position="64"/>
        <end position="66"/>
    </location>
</feature>
<feature type="helix" evidence="6">
    <location>
        <begin position="67"/>
        <end position="73"/>
    </location>
</feature>
<feature type="strand" evidence="6">
    <location>
        <begin position="77"/>
        <end position="81"/>
    </location>
</feature>
<feature type="helix" evidence="6">
    <location>
        <begin position="86"/>
        <end position="89"/>
    </location>
</feature>
<feature type="helix" evidence="6">
    <location>
        <begin position="91"/>
        <end position="105"/>
    </location>
</feature>
<feature type="helix" evidence="6">
    <location>
        <begin position="107"/>
        <end position="112"/>
    </location>
</feature>
<feature type="helix" evidence="6">
    <location>
        <begin position="121"/>
        <end position="123"/>
    </location>
</feature>
<feature type="strand" evidence="6">
    <location>
        <begin position="124"/>
        <end position="127"/>
    </location>
</feature>
<feature type="strand" evidence="6">
    <location>
        <begin position="132"/>
        <end position="134"/>
    </location>
</feature>
<feature type="strand" evidence="6">
    <location>
        <begin position="136"/>
        <end position="144"/>
    </location>
</feature>
<feature type="strand" evidence="6">
    <location>
        <begin position="153"/>
        <end position="157"/>
    </location>
</feature>
<feature type="strand" evidence="6">
    <location>
        <begin position="160"/>
        <end position="164"/>
    </location>
</feature>
<feature type="strand" evidence="6">
    <location>
        <begin position="169"/>
        <end position="171"/>
    </location>
</feature>
<feature type="strand" evidence="6">
    <location>
        <begin position="174"/>
        <end position="176"/>
    </location>
</feature>
<feature type="helix" evidence="6">
    <location>
        <begin position="185"/>
        <end position="197"/>
    </location>
</feature>
<feature type="strand" evidence="6">
    <location>
        <begin position="201"/>
        <end position="205"/>
    </location>
</feature>
<feature type="turn" evidence="6">
    <location>
        <begin position="206"/>
        <end position="208"/>
    </location>
</feature>
<feature type="strand" evidence="6">
    <location>
        <begin position="209"/>
        <end position="211"/>
    </location>
</feature>
<feature type="helix" evidence="6">
    <location>
        <begin position="214"/>
        <end position="224"/>
    </location>
</feature>
<feature type="helix" evidence="6">
    <location>
        <begin position="237"/>
        <end position="259"/>
    </location>
</feature>
<reference evidence="4" key="1">
    <citation type="journal article" date="2001" name="DNA Res.">
        <title>Complete genome sequence of an aerobic thermoacidophilic Crenarchaeon, Sulfolobus tokodaii strain7.</title>
        <authorList>
            <person name="Kawarabayasi Y."/>
            <person name="Hino Y."/>
            <person name="Horikawa H."/>
            <person name="Jin-no K."/>
            <person name="Takahashi M."/>
            <person name="Sekine M."/>
            <person name="Baba S."/>
            <person name="Ankai A."/>
            <person name="Kosugi H."/>
            <person name="Hosoyama A."/>
            <person name="Fukui S."/>
            <person name="Nagai Y."/>
            <person name="Nishijima K."/>
            <person name="Otsuka R."/>
            <person name="Nakazawa H."/>
            <person name="Takamiya M."/>
            <person name="Kato Y."/>
            <person name="Yoshizawa T."/>
            <person name="Tanaka T."/>
            <person name="Kudoh Y."/>
            <person name="Yamazaki J."/>
            <person name="Kushida N."/>
            <person name="Oguchi A."/>
            <person name="Aoki K."/>
            <person name="Masuda S."/>
            <person name="Yanagii M."/>
            <person name="Nishimura M."/>
            <person name="Yamagishi A."/>
            <person name="Oshima T."/>
            <person name="Kikuchi H."/>
        </authorList>
    </citation>
    <scope>NUCLEOTIDE SEQUENCE [LARGE SCALE GENOMIC DNA]</scope>
    <source>
        <strain evidence="4">DSM 16993 / JCM 10545 / NBRC 100140 / 7</strain>
    </source>
</reference>
<reference evidence="5" key="2">
    <citation type="journal article" date="2010" name="Proteins">
        <title>The first crystal structure of an archaeal metallo-beta-lactamase superfamily protein; ST1585 from Sulfolobus tokodaii.</title>
        <authorList>
            <person name="Shimada A."/>
            <person name="Ishikawa H."/>
            <person name="Nakagawa N."/>
            <person name="Kuramitsu S."/>
            <person name="Masui R."/>
        </authorList>
    </citation>
    <scope>X-RAY CRYSTALLOGRAPHY (1.80 ANGSTROMS) IN COMPLEX WITH ZINC</scope>
    <scope>SUBUNIT</scope>
</reference>